<evidence type="ECO:0000255" key="1">
    <source>
        <dbReference type="HAMAP-Rule" id="MF_00165"/>
    </source>
</evidence>
<comment type="function">
    <text evidence="1">Phosphorylation of dTMP to form dTDP in both de novo and salvage pathways of dTTP synthesis.</text>
</comment>
<comment type="catalytic activity">
    <reaction evidence="1">
        <text>dTMP + ATP = dTDP + ADP</text>
        <dbReference type="Rhea" id="RHEA:13517"/>
        <dbReference type="ChEBI" id="CHEBI:30616"/>
        <dbReference type="ChEBI" id="CHEBI:58369"/>
        <dbReference type="ChEBI" id="CHEBI:63528"/>
        <dbReference type="ChEBI" id="CHEBI:456216"/>
        <dbReference type="EC" id="2.7.4.9"/>
    </reaction>
</comment>
<comment type="similarity">
    <text evidence="1">Belongs to the thymidylate kinase family.</text>
</comment>
<reference key="1">
    <citation type="journal article" date="2003" name="Mol. Microbiol.">
        <title>Genome-based analysis of virulence genes in a non-biofilm-forming Staphylococcus epidermidis strain (ATCC 12228).</title>
        <authorList>
            <person name="Zhang Y.-Q."/>
            <person name="Ren S.-X."/>
            <person name="Li H.-L."/>
            <person name="Wang Y.-X."/>
            <person name="Fu G."/>
            <person name="Yang J."/>
            <person name="Qin Z.-Q."/>
            <person name="Miao Y.-G."/>
            <person name="Wang W.-Y."/>
            <person name="Chen R.-S."/>
            <person name="Shen Y."/>
            <person name="Chen Z."/>
            <person name="Yuan Z.-H."/>
            <person name="Zhao G.-P."/>
            <person name="Qu D."/>
            <person name="Danchin A."/>
            <person name="Wen Y.-M."/>
        </authorList>
    </citation>
    <scope>NUCLEOTIDE SEQUENCE [LARGE SCALE GENOMIC DNA]</scope>
    <source>
        <strain>ATCC 12228 / FDA PCI 1200</strain>
    </source>
</reference>
<proteinExistence type="inferred from homology"/>
<name>KTHY_STAES</name>
<gene>
    <name evidence="1" type="primary">tmk</name>
    <name type="ordered locus">SE_2301</name>
</gene>
<protein>
    <recommendedName>
        <fullName evidence="1">Thymidylate kinase</fullName>
        <ecNumber evidence="1">2.7.4.9</ecNumber>
    </recommendedName>
    <alternativeName>
        <fullName evidence="1">dTMP kinase</fullName>
    </alternativeName>
</protein>
<dbReference type="EC" id="2.7.4.9" evidence="1"/>
<dbReference type="EMBL" id="AE015929">
    <property type="protein sequence ID" value="AAO05943.1"/>
    <property type="molecule type" value="Genomic_DNA"/>
</dbReference>
<dbReference type="RefSeq" id="NP_765856.1">
    <property type="nucleotide sequence ID" value="NC_004461.1"/>
</dbReference>
<dbReference type="RefSeq" id="WP_001832211.1">
    <property type="nucleotide sequence ID" value="NZ_WBME01000023.1"/>
</dbReference>
<dbReference type="SMR" id="Q8CQT7"/>
<dbReference type="GeneID" id="50019607"/>
<dbReference type="KEGG" id="sep:SE_2301"/>
<dbReference type="PATRIC" id="fig|176280.10.peg.2244"/>
<dbReference type="eggNOG" id="COG0125">
    <property type="taxonomic scope" value="Bacteria"/>
</dbReference>
<dbReference type="HOGENOM" id="CLU_049131_0_2_9"/>
<dbReference type="OrthoDB" id="9774907at2"/>
<dbReference type="Proteomes" id="UP000001411">
    <property type="component" value="Chromosome"/>
</dbReference>
<dbReference type="GO" id="GO:0005829">
    <property type="term" value="C:cytosol"/>
    <property type="evidence" value="ECO:0007669"/>
    <property type="project" value="TreeGrafter"/>
</dbReference>
<dbReference type="GO" id="GO:0005524">
    <property type="term" value="F:ATP binding"/>
    <property type="evidence" value="ECO:0007669"/>
    <property type="project" value="UniProtKB-UniRule"/>
</dbReference>
<dbReference type="GO" id="GO:0004798">
    <property type="term" value="F:dTMP kinase activity"/>
    <property type="evidence" value="ECO:0007669"/>
    <property type="project" value="UniProtKB-UniRule"/>
</dbReference>
<dbReference type="GO" id="GO:0006233">
    <property type="term" value="P:dTDP biosynthetic process"/>
    <property type="evidence" value="ECO:0007669"/>
    <property type="project" value="InterPro"/>
</dbReference>
<dbReference type="GO" id="GO:0006235">
    <property type="term" value="P:dTTP biosynthetic process"/>
    <property type="evidence" value="ECO:0007669"/>
    <property type="project" value="UniProtKB-UniRule"/>
</dbReference>
<dbReference type="GO" id="GO:0006227">
    <property type="term" value="P:dUDP biosynthetic process"/>
    <property type="evidence" value="ECO:0007669"/>
    <property type="project" value="TreeGrafter"/>
</dbReference>
<dbReference type="CDD" id="cd01672">
    <property type="entry name" value="TMPK"/>
    <property type="match status" value="1"/>
</dbReference>
<dbReference type="FunFam" id="3.40.50.300:FF:000225">
    <property type="entry name" value="Thymidylate kinase"/>
    <property type="match status" value="1"/>
</dbReference>
<dbReference type="Gene3D" id="3.40.50.300">
    <property type="entry name" value="P-loop containing nucleotide triphosphate hydrolases"/>
    <property type="match status" value="1"/>
</dbReference>
<dbReference type="HAMAP" id="MF_00165">
    <property type="entry name" value="Thymidylate_kinase"/>
    <property type="match status" value="1"/>
</dbReference>
<dbReference type="InterPro" id="IPR027417">
    <property type="entry name" value="P-loop_NTPase"/>
</dbReference>
<dbReference type="InterPro" id="IPR039430">
    <property type="entry name" value="Thymidylate_kin-like_dom"/>
</dbReference>
<dbReference type="InterPro" id="IPR018095">
    <property type="entry name" value="Thymidylate_kin_CS"/>
</dbReference>
<dbReference type="InterPro" id="IPR018094">
    <property type="entry name" value="Thymidylate_kinase"/>
</dbReference>
<dbReference type="NCBIfam" id="TIGR00041">
    <property type="entry name" value="DTMP_kinase"/>
    <property type="match status" value="1"/>
</dbReference>
<dbReference type="PANTHER" id="PTHR10344">
    <property type="entry name" value="THYMIDYLATE KINASE"/>
    <property type="match status" value="1"/>
</dbReference>
<dbReference type="PANTHER" id="PTHR10344:SF4">
    <property type="entry name" value="UMP-CMP KINASE 2, MITOCHONDRIAL"/>
    <property type="match status" value="1"/>
</dbReference>
<dbReference type="Pfam" id="PF02223">
    <property type="entry name" value="Thymidylate_kin"/>
    <property type="match status" value="1"/>
</dbReference>
<dbReference type="SUPFAM" id="SSF52540">
    <property type="entry name" value="P-loop containing nucleoside triphosphate hydrolases"/>
    <property type="match status" value="1"/>
</dbReference>
<dbReference type="PROSITE" id="PS01331">
    <property type="entry name" value="THYMIDYLATE_KINASE"/>
    <property type="match status" value="1"/>
</dbReference>
<accession>Q8CQT7</accession>
<feature type="chain" id="PRO_0000155344" description="Thymidylate kinase">
    <location>
        <begin position="1"/>
        <end position="203"/>
    </location>
</feature>
<feature type="binding site" evidence="1">
    <location>
        <begin position="9"/>
        <end position="16"/>
    </location>
    <ligand>
        <name>ATP</name>
        <dbReference type="ChEBI" id="CHEBI:30616"/>
    </ligand>
</feature>
<organism>
    <name type="scientific">Staphylococcus epidermidis (strain ATCC 12228 / FDA PCI 1200)</name>
    <dbReference type="NCBI Taxonomy" id="176280"/>
    <lineage>
        <taxon>Bacteria</taxon>
        <taxon>Bacillati</taxon>
        <taxon>Bacillota</taxon>
        <taxon>Bacilli</taxon>
        <taxon>Bacillales</taxon>
        <taxon>Staphylococcaceae</taxon>
        <taxon>Staphylococcus</taxon>
    </lineage>
</organism>
<sequence>MSTFITFEGPEGAGKTSVIKKVSERLAKEYDIVTTREPGGVLTSEEIRRIVLDGDSIDIRTEAMLFAASRREHLVEKIIPSLQAGKIVLCDRYIDSSLAYQGYARGIGIKEVKLLNEFAINGLYPDLTIYLDVDAEIGRQRILKNNREQNRLDKEEKAFHEKVIEGYQKVISDNPHRFIKVNANHSLDKVVEETYQSIIKYLK</sequence>
<keyword id="KW-0067">ATP-binding</keyword>
<keyword id="KW-0418">Kinase</keyword>
<keyword id="KW-0545">Nucleotide biosynthesis</keyword>
<keyword id="KW-0547">Nucleotide-binding</keyword>
<keyword id="KW-0808">Transferase</keyword>